<comment type="function">
    <text evidence="1">F(1)F(0) ATP synthase produces ATP from ADP in the presence of a proton or sodium gradient. F-type ATPases consist of two structural domains, F(1) containing the extramembraneous catalytic core and F(0) containing the membrane proton channel, linked together by a central stalk and a peripheral stalk. During catalysis, ATP synthesis in the catalytic domain of F(1) is coupled via a rotary mechanism of the central stalk subunits to proton translocation.</text>
</comment>
<comment type="function">
    <text evidence="1">This protein is part of the stalk that links CF(0) to CF(1). It either transmits conformational changes from CF(0) to CF(1) or is implicated in proton conduction.</text>
</comment>
<comment type="subunit">
    <text evidence="1">F-type ATPases have 2 components, F(1) - the catalytic core - and F(0) - the membrane proton channel. F(1) has five subunits: alpha(3), beta(3), gamma(1), delta(1), epsilon(1). F(0) has three main subunits: a(1), b(2) and c(10-14). The alpha and beta chains form an alternating ring which encloses part of the gamma chain. F(1) is attached to F(0) by a central stalk formed by the gamma and epsilon chains, while a peripheral stalk is formed by the delta and b chains.</text>
</comment>
<comment type="subcellular location">
    <subcellularLocation>
        <location evidence="1">Cell membrane</location>
        <topology evidence="1">Peripheral membrane protein</topology>
    </subcellularLocation>
</comment>
<comment type="similarity">
    <text evidence="1">Belongs to the ATPase delta chain family.</text>
</comment>
<proteinExistence type="inferred from homology"/>
<feature type="chain" id="PRO_1000184673" description="ATP synthase subunit delta">
    <location>
        <begin position="1"/>
        <end position="179"/>
    </location>
</feature>
<evidence type="ECO:0000255" key="1">
    <source>
        <dbReference type="HAMAP-Rule" id="MF_01416"/>
    </source>
</evidence>
<sequence length="179" mass="21314">MYEYLDRRYALALYEVAEENNKVDEYLRDLKEVVNIIKNSEDICKILKHPEINTSRKKEIFTELFKDKVDNKILSFLLVLIEKDRILYLEEKLKEMEKIYLEKNNMILANIKTVIPLLKEEREELIEKLGNKYNKKIILEEEIDKSIIGGVYVRVGDDVLDGTLSTRLKDIKKMMLKRE</sequence>
<dbReference type="EMBL" id="CP001581">
    <property type="protein sequence ID" value="ACO86644.1"/>
    <property type="molecule type" value="Genomic_DNA"/>
</dbReference>
<dbReference type="RefSeq" id="WP_003356648.1">
    <property type="nucleotide sequence ID" value="NC_012563.1"/>
</dbReference>
<dbReference type="SMR" id="C1FQP2"/>
<dbReference type="KEGG" id="cby:CLM_0197"/>
<dbReference type="eggNOG" id="COG0712">
    <property type="taxonomic scope" value="Bacteria"/>
</dbReference>
<dbReference type="HOGENOM" id="CLU_085114_4_0_9"/>
<dbReference type="Proteomes" id="UP000001374">
    <property type="component" value="Chromosome"/>
</dbReference>
<dbReference type="GO" id="GO:0005886">
    <property type="term" value="C:plasma membrane"/>
    <property type="evidence" value="ECO:0007669"/>
    <property type="project" value="UniProtKB-SubCell"/>
</dbReference>
<dbReference type="GO" id="GO:0045259">
    <property type="term" value="C:proton-transporting ATP synthase complex"/>
    <property type="evidence" value="ECO:0007669"/>
    <property type="project" value="UniProtKB-KW"/>
</dbReference>
<dbReference type="GO" id="GO:0046933">
    <property type="term" value="F:proton-transporting ATP synthase activity, rotational mechanism"/>
    <property type="evidence" value="ECO:0007669"/>
    <property type="project" value="UniProtKB-UniRule"/>
</dbReference>
<dbReference type="Gene3D" id="1.10.520.20">
    <property type="entry name" value="N-terminal domain of the delta subunit of the F1F0-ATP synthase"/>
    <property type="match status" value="1"/>
</dbReference>
<dbReference type="HAMAP" id="MF_01416">
    <property type="entry name" value="ATP_synth_delta_bact"/>
    <property type="match status" value="1"/>
</dbReference>
<dbReference type="InterPro" id="IPR026015">
    <property type="entry name" value="ATP_synth_OSCP/delta_N_sf"/>
</dbReference>
<dbReference type="InterPro" id="IPR020781">
    <property type="entry name" value="ATPase_OSCP/d_CS"/>
</dbReference>
<dbReference type="InterPro" id="IPR000711">
    <property type="entry name" value="ATPase_OSCP/dsu"/>
</dbReference>
<dbReference type="NCBIfam" id="TIGR01145">
    <property type="entry name" value="ATP_synt_delta"/>
    <property type="match status" value="1"/>
</dbReference>
<dbReference type="NCBIfam" id="NF004403">
    <property type="entry name" value="PRK05758.2-4"/>
    <property type="match status" value="1"/>
</dbReference>
<dbReference type="PANTHER" id="PTHR11910">
    <property type="entry name" value="ATP SYNTHASE DELTA CHAIN"/>
    <property type="match status" value="1"/>
</dbReference>
<dbReference type="Pfam" id="PF00213">
    <property type="entry name" value="OSCP"/>
    <property type="match status" value="1"/>
</dbReference>
<dbReference type="PRINTS" id="PR00125">
    <property type="entry name" value="ATPASEDELTA"/>
</dbReference>
<dbReference type="SUPFAM" id="SSF47928">
    <property type="entry name" value="N-terminal domain of the delta subunit of the F1F0-ATP synthase"/>
    <property type="match status" value="1"/>
</dbReference>
<dbReference type="PROSITE" id="PS00389">
    <property type="entry name" value="ATPASE_DELTA"/>
    <property type="match status" value="1"/>
</dbReference>
<organism>
    <name type="scientific">Clostridium botulinum (strain Kyoto / Type A2)</name>
    <dbReference type="NCBI Taxonomy" id="536232"/>
    <lineage>
        <taxon>Bacteria</taxon>
        <taxon>Bacillati</taxon>
        <taxon>Bacillota</taxon>
        <taxon>Clostridia</taxon>
        <taxon>Eubacteriales</taxon>
        <taxon>Clostridiaceae</taxon>
        <taxon>Clostridium</taxon>
    </lineage>
</organism>
<keyword id="KW-0066">ATP synthesis</keyword>
<keyword id="KW-1003">Cell membrane</keyword>
<keyword id="KW-0139">CF(1)</keyword>
<keyword id="KW-0375">Hydrogen ion transport</keyword>
<keyword id="KW-0406">Ion transport</keyword>
<keyword id="KW-0472">Membrane</keyword>
<keyword id="KW-0813">Transport</keyword>
<name>ATPD_CLOBJ</name>
<accession>C1FQP2</accession>
<gene>
    <name evidence="1" type="primary">atpH</name>
    <name type="ordered locus">CLM_0197</name>
</gene>
<reference key="1">
    <citation type="submission" date="2008-10" db="EMBL/GenBank/DDBJ databases">
        <title>Genome sequence of Clostridium botulinum A2 Kyoto.</title>
        <authorList>
            <person name="Shrivastava S."/>
            <person name="Brinkac L.M."/>
            <person name="Brown J.L."/>
            <person name="Bruce D."/>
            <person name="Detter C.C."/>
            <person name="Johnson E.A."/>
            <person name="Munk C.A."/>
            <person name="Smith L.A."/>
            <person name="Smith T.J."/>
            <person name="Sutton G."/>
            <person name="Brettin T.S."/>
        </authorList>
    </citation>
    <scope>NUCLEOTIDE SEQUENCE [LARGE SCALE GENOMIC DNA]</scope>
    <source>
        <strain>Kyoto / Type A2</strain>
    </source>
</reference>
<protein>
    <recommendedName>
        <fullName evidence="1">ATP synthase subunit delta</fullName>
    </recommendedName>
    <alternativeName>
        <fullName evidence="1">ATP synthase F(1) sector subunit delta</fullName>
    </alternativeName>
    <alternativeName>
        <fullName evidence="1">F-type ATPase subunit delta</fullName>
        <shortName evidence="1">F-ATPase subunit delta</shortName>
    </alternativeName>
</protein>